<name>PSBA_ORYSA</name>
<feature type="initiator methionine" description="Removed" evidence="1">
    <location>
        <position position="1"/>
    </location>
</feature>
<feature type="chain" id="PRO_0000090459" description="Photosystem II protein D1" evidence="1">
    <location>
        <begin position="2"/>
        <end position="344"/>
    </location>
</feature>
<feature type="propeptide" id="PRO_0000316469" evidence="1">
    <location>
        <begin position="345"/>
        <end position="353"/>
    </location>
</feature>
<feature type="transmembrane region" description="Helical" evidence="1">
    <location>
        <begin position="29"/>
        <end position="46"/>
    </location>
</feature>
<feature type="transmembrane region" description="Helical" evidence="1">
    <location>
        <begin position="118"/>
        <end position="133"/>
    </location>
</feature>
<feature type="transmembrane region" description="Helical" evidence="1">
    <location>
        <begin position="142"/>
        <end position="156"/>
    </location>
</feature>
<feature type="transmembrane region" description="Helical" evidence="1">
    <location>
        <begin position="197"/>
        <end position="218"/>
    </location>
</feature>
<feature type="transmembrane region" description="Helical" evidence="1">
    <location>
        <begin position="274"/>
        <end position="288"/>
    </location>
</feature>
<feature type="binding site" description="axial binding residue" evidence="1">
    <location>
        <position position="118"/>
    </location>
    <ligand>
        <name>chlorophyll a</name>
        <dbReference type="ChEBI" id="CHEBI:58416"/>
        <label>ChlzD1</label>
    </ligand>
    <ligandPart>
        <name>Mg</name>
        <dbReference type="ChEBI" id="CHEBI:25107"/>
    </ligandPart>
</feature>
<feature type="binding site" evidence="1">
    <location>
        <position position="126"/>
    </location>
    <ligand>
        <name>pheophytin a</name>
        <dbReference type="ChEBI" id="CHEBI:136840"/>
        <label>D1</label>
    </ligand>
</feature>
<feature type="binding site" evidence="1">
    <location>
        <position position="170"/>
    </location>
    <ligand>
        <name>[CaMn4O5] cluster</name>
        <dbReference type="ChEBI" id="CHEBI:189552"/>
    </ligand>
</feature>
<feature type="binding site" evidence="1">
    <location>
        <position position="189"/>
    </location>
    <ligand>
        <name>[CaMn4O5] cluster</name>
        <dbReference type="ChEBI" id="CHEBI:189552"/>
    </ligand>
</feature>
<feature type="binding site" description="axial binding residue" evidence="1">
    <location>
        <position position="198"/>
    </location>
    <ligand>
        <name>chlorophyll a</name>
        <dbReference type="ChEBI" id="CHEBI:58416"/>
        <label>PD1</label>
    </ligand>
    <ligandPart>
        <name>Mg</name>
        <dbReference type="ChEBI" id="CHEBI:25107"/>
    </ligandPart>
</feature>
<feature type="binding site" evidence="1">
    <location>
        <position position="215"/>
    </location>
    <ligand>
        <name>a quinone</name>
        <dbReference type="ChEBI" id="CHEBI:132124"/>
        <label>B</label>
    </ligand>
</feature>
<feature type="binding site" evidence="1">
    <location>
        <position position="215"/>
    </location>
    <ligand>
        <name>Fe cation</name>
        <dbReference type="ChEBI" id="CHEBI:24875"/>
        <note>ligand shared with heterodimeric partner</note>
    </ligand>
</feature>
<feature type="binding site" evidence="1">
    <location>
        <begin position="264"/>
        <end position="265"/>
    </location>
    <ligand>
        <name>a quinone</name>
        <dbReference type="ChEBI" id="CHEBI:132124"/>
        <label>B</label>
    </ligand>
</feature>
<feature type="binding site" evidence="1">
    <location>
        <position position="272"/>
    </location>
    <ligand>
        <name>Fe cation</name>
        <dbReference type="ChEBI" id="CHEBI:24875"/>
        <note>ligand shared with heterodimeric partner</note>
    </ligand>
</feature>
<feature type="binding site" evidence="1">
    <location>
        <position position="332"/>
    </location>
    <ligand>
        <name>[CaMn4O5] cluster</name>
        <dbReference type="ChEBI" id="CHEBI:189552"/>
    </ligand>
</feature>
<feature type="binding site" evidence="1">
    <location>
        <position position="333"/>
    </location>
    <ligand>
        <name>[CaMn4O5] cluster</name>
        <dbReference type="ChEBI" id="CHEBI:189552"/>
    </ligand>
</feature>
<feature type="binding site" evidence="1">
    <location>
        <position position="342"/>
    </location>
    <ligand>
        <name>[CaMn4O5] cluster</name>
        <dbReference type="ChEBI" id="CHEBI:189552"/>
    </ligand>
</feature>
<feature type="binding site" evidence="1">
    <location>
        <position position="344"/>
    </location>
    <ligand>
        <name>[CaMn4O5] cluster</name>
        <dbReference type="ChEBI" id="CHEBI:189552"/>
    </ligand>
</feature>
<feature type="site" description="Tyrosine radical intermediate" evidence="1">
    <location>
        <position position="161"/>
    </location>
</feature>
<feature type="site" description="Stabilizes free radical intermediate" evidence="1">
    <location>
        <position position="190"/>
    </location>
</feature>
<feature type="site" description="Cleavage; by CTPA" evidence="1">
    <location>
        <begin position="344"/>
        <end position="345"/>
    </location>
</feature>
<feature type="modified residue" description="N-acetylthreonine" evidence="1">
    <location>
        <position position="2"/>
    </location>
</feature>
<feature type="modified residue" description="Phosphothreonine" evidence="1">
    <location>
        <position position="2"/>
    </location>
</feature>
<gene>
    <name evidence="1" type="primary">psbA</name>
    <name type="ORF">PA001</name>
</gene>
<protein>
    <recommendedName>
        <fullName evidence="1">Photosystem II protein D1</fullName>
        <shortName evidence="1">PSII D1 protein</shortName>
        <ecNumber evidence="1">1.10.3.9</ecNumber>
    </recommendedName>
    <alternativeName>
        <fullName evidence="1">Photosystem II Q(B) protein</fullName>
    </alternativeName>
</protein>
<proteinExistence type="inferred from homology"/>
<keyword id="KW-0007">Acetylation</keyword>
<keyword id="KW-0106">Calcium</keyword>
<keyword id="KW-0148">Chlorophyll</keyword>
<keyword id="KW-0150">Chloroplast</keyword>
<keyword id="KW-0157">Chromophore</keyword>
<keyword id="KW-0249">Electron transport</keyword>
<keyword id="KW-0359">Herbicide resistance</keyword>
<keyword id="KW-0408">Iron</keyword>
<keyword id="KW-0460">Magnesium</keyword>
<keyword id="KW-0464">Manganese</keyword>
<keyword id="KW-0472">Membrane</keyword>
<keyword id="KW-0479">Metal-binding</keyword>
<keyword id="KW-0560">Oxidoreductase</keyword>
<keyword id="KW-0597">Phosphoprotein</keyword>
<keyword id="KW-0602">Photosynthesis</keyword>
<keyword id="KW-0604">Photosystem II</keyword>
<keyword id="KW-0934">Plastid</keyword>
<keyword id="KW-0793">Thylakoid</keyword>
<keyword id="KW-0812">Transmembrane</keyword>
<keyword id="KW-1133">Transmembrane helix</keyword>
<keyword id="KW-0813">Transport</keyword>
<comment type="function">
    <text evidence="1">Photosystem II (PSII) is a light-driven water:plastoquinone oxidoreductase that uses light energy to abstract electrons from H(2)O, generating O(2) and a proton gradient subsequently used for ATP formation. It consists of a core antenna complex that captures photons, and an electron transfer chain that converts photonic excitation into a charge separation. The D1/D2 (PsbA/PsbD) reaction center heterodimer binds P680, the primary electron donor of PSII as well as several subsequent electron acceptors.</text>
</comment>
<comment type="catalytic activity">
    <reaction evidence="1">
        <text>2 a plastoquinone + 4 hnu + 2 H2O = 2 a plastoquinol + O2</text>
        <dbReference type="Rhea" id="RHEA:36359"/>
        <dbReference type="Rhea" id="RHEA-COMP:9561"/>
        <dbReference type="Rhea" id="RHEA-COMP:9562"/>
        <dbReference type="ChEBI" id="CHEBI:15377"/>
        <dbReference type="ChEBI" id="CHEBI:15379"/>
        <dbReference type="ChEBI" id="CHEBI:17757"/>
        <dbReference type="ChEBI" id="CHEBI:30212"/>
        <dbReference type="ChEBI" id="CHEBI:62192"/>
        <dbReference type="EC" id="1.10.3.9"/>
    </reaction>
</comment>
<comment type="cofactor">
    <text evidence="1">The D1/D2 heterodimer binds P680, chlorophylls that are the primary electron donor of PSII, and subsequent electron acceptors. It shares a non-heme iron and each subunit binds pheophytin, quinone, additional chlorophylls, carotenoids and lipids. D1 provides most of the ligands for the Mn4-Ca-O5 cluster of the oxygen-evolving complex (OEC). There is also a Cl(-1) ion associated with D1 and D2, which is required for oxygen evolution. The PSII complex binds additional chlorophylls, carotenoids and specific lipids.</text>
</comment>
<comment type="subunit">
    <text evidence="1">PSII is composed of 1 copy each of membrane proteins PsbA, PsbB, PsbC, PsbD, PsbE, PsbF, PsbH, PsbI, PsbJ, PsbK, PsbL, PsbM, PsbT, PsbX, PsbY, PsbZ, Psb30/Ycf12, at least 3 peripheral proteins of the oxygen-evolving complex and a large number of cofactors. It forms dimeric complexes.</text>
</comment>
<comment type="subcellular location">
    <subcellularLocation>
        <location evidence="1">Plastid</location>
        <location evidence="1">Chloroplast thylakoid membrane</location>
        <topology evidence="1">Multi-pass membrane protein</topology>
    </subcellularLocation>
</comment>
<comment type="PTM">
    <text evidence="1">Tyr-161 forms a radical intermediate that is referred to as redox-active TyrZ, YZ or Y-Z.</text>
</comment>
<comment type="PTM">
    <text evidence="1">C-terminally processed by CTPA; processing is essential to allow assembly of the oxygen-evolving complex and thus photosynthetic growth.</text>
</comment>
<comment type="miscellaneous">
    <text evidence="1">2 of the reaction center chlorophylls (ChlD1 and ChlD2) are entirely coordinated by water.</text>
</comment>
<comment type="miscellaneous">
    <text evidence="1">Herbicides such as atrazine, BNT, diuron or ioxynil bind in the Q(B) binding site and block subsequent electron transfer.</text>
</comment>
<comment type="similarity">
    <text evidence="1">Belongs to the reaction center PufL/M/PsbA/D family.</text>
</comment>
<geneLocation type="chloroplast"/>
<organism>
    <name type="scientific">Oryza sativa</name>
    <name type="common">Rice</name>
    <dbReference type="NCBI Taxonomy" id="4530"/>
    <lineage>
        <taxon>Eukaryota</taxon>
        <taxon>Viridiplantae</taxon>
        <taxon>Streptophyta</taxon>
        <taxon>Embryophyta</taxon>
        <taxon>Tracheophyta</taxon>
        <taxon>Spermatophyta</taxon>
        <taxon>Magnoliopsida</taxon>
        <taxon>Liliopsida</taxon>
        <taxon>Poales</taxon>
        <taxon>Poaceae</taxon>
        <taxon>BOP clade</taxon>
        <taxon>Oryzoideae</taxon>
        <taxon>Oryzeae</taxon>
        <taxon>Oryzinae</taxon>
        <taxon>Oryza</taxon>
    </lineage>
</organism>
<reference key="1">
    <citation type="journal article" date="2004" name="Plant Physiol.">
        <title>A comparison of rice chloroplast genomes.</title>
        <authorList>
            <person name="Tang J."/>
            <person name="Xia H."/>
            <person name="Cao M."/>
            <person name="Zhang X."/>
            <person name="Zeng W."/>
            <person name="Hu S."/>
            <person name="Tong W."/>
            <person name="Wang J."/>
            <person name="Wang J."/>
            <person name="Yu J."/>
            <person name="Yang H."/>
            <person name="Zhu L."/>
        </authorList>
    </citation>
    <scope>NUCLEOTIDE SEQUENCE [LARGE SCALE GENOMIC DNA]</scope>
    <source>
        <strain>cv. PA64s</strain>
    </source>
</reference>
<evidence type="ECO:0000255" key="1">
    <source>
        <dbReference type="HAMAP-Rule" id="MF_01379"/>
    </source>
</evidence>
<accession>P0C432</accession>
<accession>P12094</accession>
<accession>Q6QY90</accession>
<accession>Q7DNA9</accession>
<dbReference type="EC" id="1.10.3.9" evidence="1"/>
<dbReference type="EMBL" id="AY522331">
    <property type="protein sequence ID" value="AAS46167.1"/>
    <property type="molecule type" value="Genomic_DNA"/>
</dbReference>
<dbReference type="RefSeq" id="NP_039360.1">
    <property type="nucleotide sequence ID" value="NC_001320.1"/>
</dbReference>
<dbReference type="RefSeq" id="YP_009305284.1">
    <property type="nucleotide sequence ID" value="NC_031333.1"/>
</dbReference>
<dbReference type="SMR" id="P0C432"/>
<dbReference type="GeneID" id="29141328"/>
<dbReference type="GeneID" id="3131409"/>
<dbReference type="KEGG" id="osa:3131409"/>
<dbReference type="ExpressionAtlas" id="P0C432">
    <property type="expression patterns" value="baseline and differential"/>
</dbReference>
<dbReference type="GO" id="GO:0009535">
    <property type="term" value="C:chloroplast thylakoid membrane"/>
    <property type="evidence" value="ECO:0007669"/>
    <property type="project" value="UniProtKB-SubCell"/>
</dbReference>
<dbReference type="GO" id="GO:0009523">
    <property type="term" value="C:photosystem II"/>
    <property type="evidence" value="ECO:0007669"/>
    <property type="project" value="UniProtKB-KW"/>
</dbReference>
<dbReference type="GO" id="GO:0009536">
    <property type="term" value="C:plastid"/>
    <property type="evidence" value="ECO:0000305"/>
    <property type="project" value="Gramene"/>
</dbReference>
<dbReference type="GO" id="GO:0016168">
    <property type="term" value="F:chlorophyll binding"/>
    <property type="evidence" value="ECO:0007669"/>
    <property type="project" value="UniProtKB-UniRule"/>
</dbReference>
<dbReference type="GO" id="GO:0045156">
    <property type="term" value="F:electron transporter, transferring electrons within the cyclic electron transport pathway of photosynthesis activity"/>
    <property type="evidence" value="ECO:0007669"/>
    <property type="project" value="InterPro"/>
</dbReference>
<dbReference type="GO" id="GO:0005506">
    <property type="term" value="F:iron ion binding"/>
    <property type="evidence" value="ECO:0007669"/>
    <property type="project" value="UniProtKB-UniRule"/>
</dbReference>
<dbReference type="GO" id="GO:0016682">
    <property type="term" value="F:oxidoreductase activity, acting on diphenols and related substances as donors, oxygen as acceptor"/>
    <property type="evidence" value="ECO:0007669"/>
    <property type="project" value="UniProtKB-UniRule"/>
</dbReference>
<dbReference type="GO" id="GO:0010242">
    <property type="term" value="F:oxygen evolving activity"/>
    <property type="evidence" value="ECO:0007669"/>
    <property type="project" value="UniProtKB-EC"/>
</dbReference>
<dbReference type="GO" id="GO:0009772">
    <property type="term" value="P:photosynthetic electron transport in photosystem II"/>
    <property type="evidence" value="ECO:0007669"/>
    <property type="project" value="InterPro"/>
</dbReference>
<dbReference type="GO" id="GO:0009635">
    <property type="term" value="P:response to herbicide"/>
    <property type="evidence" value="ECO:0007669"/>
    <property type="project" value="UniProtKB-KW"/>
</dbReference>
<dbReference type="CDD" id="cd09289">
    <property type="entry name" value="Photosystem-II_D1"/>
    <property type="match status" value="1"/>
</dbReference>
<dbReference type="FunFam" id="1.20.85.10:FF:000002">
    <property type="entry name" value="Photosystem II protein D1"/>
    <property type="match status" value="1"/>
</dbReference>
<dbReference type="Gene3D" id="1.20.85.10">
    <property type="entry name" value="Photosystem II protein D1-like"/>
    <property type="match status" value="1"/>
</dbReference>
<dbReference type="HAMAP" id="MF_01379">
    <property type="entry name" value="PSII_PsbA_D1"/>
    <property type="match status" value="1"/>
</dbReference>
<dbReference type="InterPro" id="IPR055266">
    <property type="entry name" value="D1/D2"/>
</dbReference>
<dbReference type="InterPro" id="IPR036854">
    <property type="entry name" value="Photo_II_D1/D2_sf"/>
</dbReference>
<dbReference type="InterPro" id="IPR000484">
    <property type="entry name" value="Photo_RC_L/M"/>
</dbReference>
<dbReference type="InterPro" id="IPR055265">
    <property type="entry name" value="Photo_RC_L/M_CS"/>
</dbReference>
<dbReference type="InterPro" id="IPR005867">
    <property type="entry name" value="PSII_D1"/>
</dbReference>
<dbReference type="NCBIfam" id="TIGR01151">
    <property type="entry name" value="psbA"/>
    <property type="match status" value="1"/>
</dbReference>
<dbReference type="PANTHER" id="PTHR33149:SF12">
    <property type="entry name" value="PHOTOSYSTEM II D2 PROTEIN"/>
    <property type="match status" value="1"/>
</dbReference>
<dbReference type="PANTHER" id="PTHR33149">
    <property type="entry name" value="PHOTOSYSTEM II PROTEIN D1"/>
    <property type="match status" value="1"/>
</dbReference>
<dbReference type="Pfam" id="PF00124">
    <property type="entry name" value="Photo_RC"/>
    <property type="match status" value="1"/>
</dbReference>
<dbReference type="PRINTS" id="PR00256">
    <property type="entry name" value="REACTNCENTRE"/>
</dbReference>
<dbReference type="SUPFAM" id="SSF81483">
    <property type="entry name" value="Bacterial photosystem II reaction centre, L and M subunits"/>
    <property type="match status" value="1"/>
</dbReference>
<dbReference type="PROSITE" id="PS00244">
    <property type="entry name" value="REACTION_CENTER"/>
    <property type="match status" value="1"/>
</dbReference>
<sequence length="353" mass="38963">MTAILERRESTSLWGRFCNWITSTENRLYIGWFGVLMIPTLLTATSVFIIAFIAAPPVDIDGIREPVSGSLLYGNNIISGAIIPTSAAIGLHFYPIWEAASVDEWLYNGGPYELIVLHFLLGVACYMGREWELSFRLGMRPWIAVAYSAPVAAATAVFLIYPIGQGSFSDGMPLGISGTFNFMIVFQAEHNILMHPFHMLGVAGVFGGSLFSAMHGSLVTSSLIRETTENESANEGYRFGQEEETYNIVAAHGYFGRLIFQYASFNNSRSLHFFLAAWPVVGIWFTALGISTMAFNLNGFNFNQSVVDSQGRVINTWADIINRANLGMEVMHERNAHNFPLDLAALEVPSLNG</sequence>